<reference key="1">
    <citation type="journal article" date="2009" name="PLoS Genet.">
        <title>Organised genome dynamics in the Escherichia coli species results in highly diverse adaptive paths.</title>
        <authorList>
            <person name="Touchon M."/>
            <person name="Hoede C."/>
            <person name="Tenaillon O."/>
            <person name="Barbe V."/>
            <person name="Baeriswyl S."/>
            <person name="Bidet P."/>
            <person name="Bingen E."/>
            <person name="Bonacorsi S."/>
            <person name="Bouchier C."/>
            <person name="Bouvet O."/>
            <person name="Calteau A."/>
            <person name="Chiapello H."/>
            <person name="Clermont O."/>
            <person name="Cruveiller S."/>
            <person name="Danchin A."/>
            <person name="Diard M."/>
            <person name="Dossat C."/>
            <person name="Karoui M.E."/>
            <person name="Frapy E."/>
            <person name="Garry L."/>
            <person name="Ghigo J.M."/>
            <person name="Gilles A.M."/>
            <person name="Johnson J."/>
            <person name="Le Bouguenec C."/>
            <person name="Lescat M."/>
            <person name="Mangenot S."/>
            <person name="Martinez-Jehanne V."/>
            <person name="Matic I."/>
            <person name="Nassif X."/>
            <person name="Oztas S."/>
            <person name="Petit M.A."/>
            <person name="Pichon C."/>
            <person name="Rouy Z."/>
            <person name="Ruf C.S."/>
            <person name="Schneider D."/>
            <person name="Tourret J."/>
            <person name="Vacherie B."/>
            <person name="Vallenet D."/>
            <person name="Medigue C."/>
            <person name="Rocha E.P.C."/>
            <person name="Denamur E."/>
        </authorList>
    </citation>
    <scope>NUCLEOTIDE SEQUENCE [LARGE SCALE GENOMIC DNA]</scope>
    <source>
        <strain>UMN026 / ExPEC</strain>
    </source>
</reference>
<name>RS11_ECOLU</name>
<organism>
    <name type="scientific">Escherichia coli O17:K52:H18 (strain UMN026 / ExPEC)</name>
    <dbReference type="NCBI Taxonomy" id="585056"/>
    <lineage>
        <taxon>Bacteria</taxon>
        <taxon>Pseudomonadati</taxon>
        <taxon>Pseudomonadota</taxon>
        <taxon>Gammaproteobacteria</taxon>
        <taxon>Enterobacterales</taxon>
        <taxon>Enterobacteriaceae</taxon>
        <taxon>Escherichia</taxon>
    </lineage>
</organism>
<keyword id="KW-0687">Ribonucleoprotein</keyword>
<keyword id="KW-0689">Ribosomal protein</keyword>
<keyword id="KW-0694">RNA-binding</keyword>
<keyword id="KW-0699">rRNA-binding</keyword>
<proteinExistence type="inferred from homology"/>
<gene>
    <name evidence="1" type="primary">rpsK</name>
    <name type="ordered locus">ECUMN_3771</name>
</gene>
<evidence type="ECO:0000255" key="1">
    <source>
        <dbReference type="HAMAP-Rule" id="MF_01310"/>
    </source>
</evidence>
<evidence type="ECO:0000305" key="2"/>
<protein>
    <recommendedName>
        <fullName evidence="1">Small ribosomal subunit protein uS11</fullName>
    </recommendedName>
    <alternativeName>
        <fullName evidence="2">30S ribosomal protein S11</fullName>
    </alternativeName>
</protein>
<accession>B7NDR9</accession>
<dbReference type="EMBL" id="CU928163">
    <property type="protein sequence ID" value="CAR14919.1"/>
    <property type="molecule type" value="Genomic_DNA"/>
</dbReference>
<dbReference type="RefSeq" id="WP_001029684.1">
    <property type="nucleotide sequence ID" value="NC_011751.1"/>
</dbReference>
<dbReference type="RefSeq" id="YP_002414424.1">
    <property type="nucleotide sequence ID" value="NC_011751.1"/>
</dbReference>
<dbReference type="SMR" id="B7NDR9"/>
<dbReference type="STRING" id="585056.ECUMN_3771"/>
<dbReference type="GeneID" id="93778690"/>
<dbReference type="KEGG" id="eum:ECUMN_3771"/>
<dbReference type="PATRIC" id="fig|585056.7.peg.3945"/>
<dbReference type="HOGENOM" id="CLU_072439_5_0_6"/>
<dbReference type="PRO" id="PR:B7NDR9"/>
<dbReference type="Proteomes" id="UP000007097">
    <property type="component" value="Chromosome"/>
</dbReference>
<dbReference type="GO" id="GO:1990904">
    <property type="term" value="C:ribonucleoprotein complex"/>
    <property type="evidence" value="ECO:0007669"/>
    <property type="project" value="UniProtKB-KW"/>
</dbReference>
<dbReference type="GO" id="GO:0005840">
    <property type="term" value="C:ribosome"/>
    <property type="evidence" value="ECO:0007669"/>
    <property type="project" value="UniProtKB-KW"/>
</dbReference>
<dbReference type="GO" id="GO:0019843">
    <property type="term" value="F:rRNA binding"/>
    <property type="evidence" value="ECO:0007669"/>
    <property type="project" value="UniProtKB-UniRule"/>
</dbReference>
<dbReference type="GO" id="GO:0003735">
    <property type="term" value="F:structural constituent of ribosome"/>
    <property type="evidence" value="ECO:0007669"/>
    <property type="project" value="InterPro"/>
</dbReference>
<dbReference type="GO" id="GO:0006412">
    <property type="term" value="P:translation"/>
    <property type="evidence" value="ECO:0007669"/>
    <property type="project" value="UniProtKB-UniRule"/>
</dbReference>
<dbReference type="FunFam" id="3.30.420.80:FF:000001">
    <property type="entry name" value="30S ribosomal protein S11"/>
    <property type="match status" value="1"/>
</dbReference>
<dbReference type="Gene3D" id="3.30.420.80">
    <property type="entry name" value="Ribosomal protein S11"/>
    <property type="match status" value="1"/>
</dbReference>
<dbReference type="HAMAP" id="MF_01310">
    <property type="entry name" value="Ribosomal_uS11"/>
    <property type="match status" value="1"/>
</dbReference>
<dbReference type="InterPro" id="IPR001971">
    <property type="entry name" value="Ribosomal_uS11"/>
</dbReference>
<dbReference type="InterPro" id="IPR019981">
    <property type="entry name" value="Ribosomal_uS11_bac-type"/>
</dbReference>
<dbReference type="InterPro" id="IPR018102">
    <property type="entry name" value="Ribosomal_uS11_CS"/>
</dbReference>
<dbReference type="InterPro" id="IPR036967">
    <property type="entry name" value="Ribosomal_uS11_sf"/>
</dbReference>
<dbReference type="NCBIfam" id="NF003698">
    <property type="entry name" value="PRK05309.1"/>
    <property type="match status" value="1"/>
</dbReference>
<dbReference type="NCBIfam" id="TIGR03632">
    <property type="entry name" value="uS11_bact"/>
    <property type="match status" value="1"/>
</dbReference>
<dbReference type="PANTHER" id="PTHR11759">
    <property type="entry name" value="40S RIBOSOMAL PROTEIN S14/30S RIBOSOMAL PROTEIN S11"/>
    <property type="match status" value="1"/>
</dbReference>
<dbReference type="Pfam" id="PF00411">
    <property type="entry name" value="Ribosomal_S11"/>
    <property type="match status" value="1"/>
</dbReference>
<dbReference type="PIRSF" id="PIRSF002131">
    <property type="entry name" value="Ribosomal_S11"/>
    <property type="match status" value="1"/>
</dbReference>
<dbReference type="SUPFAM" id="SSF53137">
    <property type="entry name" value="Translational machinery components"/>
    <property type="match status" value="1"/>
</dbReference>
<dbReference type="PROSITE" id="PS00054">
    <property type="entry name" value="RIBOSOMAL_S11"/>
    <property type="match status" value="1"/>
</dbReference>
<sequence length="129" mass="13845">MAKAPIRARKRVRKQVSDGVAHIHASFNNTIVTITDRQGNALGWATAGGSGFRGSRKSTPFAAQVAAERCADAVKEYGIKNLEVMVKGPGPGRESTIRALNAAGFRITNITDVTPIPHNGCRPPKKRRV</sequence>
<comment type="function">
    <text evidence="1">Located on the platform of the 30S subunit, it bridges several disparate RNA helices of the 16S rRNA. Forms part of the Shine-Dalgarno cleft in the 70S ribosome.</text>
</comment>
<comment type="subunit">
    <text evidence="1">Part of the 30S ribosomal subunit. Interacts with proteins S7 and S18. Binds to IF-3.</text>
</comment>
<comment type="similarity">
    <text evidence="1">Belongs to the universal ribosomal protein uS11 family.</text>
</comment>
<feature type="chain" id="PRO_1000141092" description="Small ribosomal subunit protein uS11">
    <location>
        <begin position="1"/>
        <end position="129"/>
    </location>
</feature>